<proteinExistence type="evidence at transcript level"/>
<accession>Q8BZK4</accession>
<accession>B8JJY8</accession>
<accession>Q8BL81</accession>
<accession>Q8BXC4</accession>
<accession>Q9JJG8</accession>
<name>S35F4_MOUSE</name>
<protein>
    <recommendedName>
        <fullName>Solute carrier family 35 member F4</fullName>
    </recommendedName>
</protein>
<reference key="1">
    <citation type="submission" date="2000-04" db="EMBL/GenBank/DDBJ databases">
        <title>Isolation of full-length cDNA clones from mouse brain cDNA library made by oligo-capping method.</title>
        <authorList>
            <person name="Osada N."/>
            <person name="Kusuda J."/>
            <person name="Tanuma R."/>
            <person name="Ito A."/>
            <person name="Hirata M."/>
            <person name="Sugano S."/>
            <person name="Hashimoto K."/>
        </authorList>
    </citation>
    <scope>NUCLEOTIDE SEQUENCE [LARGE SCALE MRNA] (ISOFORM 2)</scope>
    <source>
        <strain>C57BL/6J</strain>
        <tissue>Brain</tissue>
    </source>
</reference>
<reference key="2">
    <citation type="journal article" date="2005" name="Science">
        <title>The transcriptional landscape of the mammalian genome.</title>
        <authorList>
            <person name="Carninci P."/>
            <person name="Kasukawa T."/>
            <person name="Katayama S."/>
            <person name="Gough J."/>
            <person name="Frith M.C."/>
            <person name="Maeda N."/>
            <person name="Oyama R."/>
            <person name="Ravasi T."/>
            <person name="Lenhard B."/>
            <person name="Wells C."/>
            <person name="Kodzius R."/>
            <person name="Shimokawa K."/>
            <person name="Bajic V.B."/>
            <person name="Brenner S.E."/>
            <person name="Batalov S."/>
            <person name="Forrest A.R."/>
            <person name="Zavolan M."/>
            <person name="Davis M.J."/>
            <person name="Wilming L.G."/>
            <person name="Aidinis V."/>
            <person name="Allen J.E."/>
            <person name="Ambesi-Impiombato A."/>
            <person name="Apweiler R."/>
            <person name="Aturaliya R.N."/>
            <person name="Bailey T.L."/>
            <person name="Bansal M."/>
            <person name="Baxter L."/>
            <person name="Beisel K.W."/>
            <person name="Bersano T."/>
            <person name="Bono H."/>
            <person name="Chalk A.M."/>
            <person name="Chiu K.P."/>
            <person name="Choudhary V."/>
            <person name="Christoffels A."/>
            <person name="Clutterbuck D.R."/>
            <person name="Crowe M.L."/>
            <person name="Dalla E."/>
            <person name="Dalrymple B.P."/>
            <person name="de Bono B."/>
            <person name="Della Gatta G."/>
            <person name="di Bernardo D."/>
            <person name="Down T."/>
            <person name="Engstrom P."/>
            <person name="Fagiolini M."/>
            <person name="Faulkner G."/>
            <person name="Fletcher C.F."/>
            <person name="Fukushima T."/>
            <person name="Furuno M."/>
            <person name="Futaki S."/>
            <person name="Gariboldi M."/>
            <person name="Georgii-Hemming P."/>
            <person name="Gingeras T.R."/>
            <person name="Gojobori T."/>
            <person name="Green R.E."/>
            <person name="Gustincich S."/>
            <person name="Harbers M."/>
            <person name="Hayashi Y."/>
            <person name="Hensch T.K."/>
            <person name="Hirokawa N."/>
            <person name="Hill D."/>
            <person name="Huminiecki L."/>
            <person name="Iacono M."/>
            <person name="Ikeo K."/>
            <person name="Iwama A."/>
            <person name="Ishikawa T."/>
            <person name="Jakt M."/>
            <person name="Kanapin A."/>
            <person name="Katoh M."/>
            <person name="Kawasawa Y."/>
            <person name="Kelso J."/>
            <person name="Kitamura H."/>
            <person name="Kitano H."/>
            <person name="Kollias G."/>
            <person name="Krishnan S.P."/>
            <person name="Kruger A."/>
            <person name="Kummerfeld S.K."/>
            <person name="Kurochkin I.V."/>
            <person name="Lareau L.F."/>
            <person name="Lazarevic D."/>
            <person name="Lipovich L."/>
            <person name="Liu J."/>
            <person name="Liuni S."/>
            <person name="McWilliam S."/>
            <person name="Madan Babu M."/>
            <person name="Madera M."/>
            <person name="Marchionni L."/>
            <person name="Matsuda H."/>
            <person name="Matsuzawa S."/>
            <person name="Miki H."/>
            <person name="Mignone F."/>
            <person name="Miyake S."/>
            <person name="Morris K."/>
            <person name="Mottagui-Tabar S."/>
            <person name="Mulder N."/>
            <person name="Nakano N."/>
            <person name="Nakauchi H."/>
            <person name="Ng P."/>
            <person name="Nilsson R."/>
            <person name="Nishiguchi S."/>
            <person name="Nishikawa S."/>
            <person name="Nori F."/>
            <person name="Ohara O."/>
            <person name="Okazaki Y."/>
            <person name="Orlando V."/>
            <person name="Pang K.C."/>
            <person name="Pavan W.J."/>
            <person name="Pavesi G."/>
            <person name="Pesole G."/>
            <person name="Petrovsky N."/>
            <person name="Piazza S."/>
            <person name="Reed J."/>
            <person name="Reid J.F."/>
            <person name="Ring B.Z."/>
            <person name="Ringwald M."/>
            <person name="Rost B."/>
            <person name="Ruan Y."/>
            <person name="Salzberg S.L."/>
            <person name="Sandelin A."/>
            <person name="Schneider C."/>
            <person name="Schoenbach C."/>
            <person name="Sekiguchi K."/>
            <person name="Semple C.A."/>
            <person name="Seno S."/>
            <person name="Sessa L."/>
            <person name="Sheng Y."/>
            <person name="Shibata Y."/>
            <person name="Shimada H."/>
            <person name="Shimada K."/>
            <person name="Silva D."/>
            <person name="Sinclair B."/>
            <person name="Sperling S."/>
            <person name="Stupka E."/>
            <person name="Sugiura K."/>
            <person name="Sultana R."/>
            <person name="Takenaka Y."/>
            <person name="Taki K."/>
            <person name="Tammoja K."/>
            <person name="Tan S.L."/>
            <person name="Tang S."/>
            <person name="Taylor M.S."/>
            <person name="Tegner J."/>
            <person name="Teichmann S.A."/>
            <person name="Ueda H.R."/>
            <person name="van Nimwegen E."/>
            <person name="Verardo R."/>
            <person name="Wei C.L."/>
            <person name="Yagi K."/>
            <person name="Yamanishi H."/>
            <person name="Zabarovsky E."/>
            <person name="Zhu S."/>
            <person name="Zimmer A."/>
            <person name="Hide W."/>
            <person name="Bult C."/>
            <person name="Grimmond S.M."/>
            <person name="Teasdale R.D."/>
            <person name="Liu E.T."/>
            <person name="Brusic V."/>
            <person name="Quackenbush J."/>
            <person name="Wahlestedt C."/>
            <person name="Mattick J.S."/>
            <person name="Hume D.A."/>
            <person name="Kai C."/>
            <person name="Sasaki D."/>
            <person name="Tomaru Y."/>
            <person name="Fukuda S."/>
            <person name="Kanamori-Katayama M."/>
            <person name="Suzuki M."/>
            <person name="Aoki J."/>
            <person name="Arakawa T."/>
            <person name="Iida J."/>
            <person name="Imamura K."/>
            <person name="Itoh M."/>
            <person name="Kato T."/>
            <person name="Kawaji H."/>
            <person name="Kawagashira N."/>
            <person name="Kawashima T."/>
            <person name="Kojima M."/>
            <person name="Kondo S."/>
            <person name="Konno H."/>
            <person name="Nakano K."/>
            <person name="Ninomiya N."/>
            <person name="Nishio T."/>
            <person name="Okada M."/>
            <person name="Plessy C."/>
            <person name="Shibata K."/>
            <person name="Shiraki T."/>
            <person name="Suzuki S."/>
            <person name="Tagami M."/>
            <person name="Waki K."/>
            <person name="Watahiki A."/>
            <person name="Okamura-Oho Y."/>
            <person name="Suzuki H."/>
            <person name="Kawai J."/>
            <person name="Hayashizaki Y."/>
        </authorList>
    </citation>
    <scope>NUCLEOTIDE SEQUENCE [LARGE SCALE MRNA] (ISOFORMS 1 AND 3)</scope>
    <source>
        <strain>C57BL/6J</strain>
        <tissue>Corpora quadrigemina</tissue>
        <tissue>Diencephalon</tissue>
        <tissue>Head</tissue>
    </source>
</reference>
<reference key="3">
    <citation type="journal article" date="2009" name="PLoS Biol.">
        <title>Lineage-specific biology revealed by a finished genome assembly of the mouse.</title>
        <authorList>
            <person name="Church D.M."/>
            <person name="Goodstadt L."/>
            <person name="Hillier L.W."/>
            <person name="Zody M.C."/>
            <person name="Goldstein S."/>
            <person name="She X."/>
            <person name="Bult C.J."/>
            <person name="Agarwala R."/>
            <person name="Cherry J.L."/>
            <person name="DiCuccio M."/>
            <person name="Hlavina W."/>
            <person name="Kapustin Y."/>
            <person name="Meric P."/>
            <person name="Maglott D."/>
            <person name="Birtle Z."/>
            <person name="Marques A.C."/>
            <person name="Graves T."/>
            <person name="Zhou S."/>
            <person name="Teague B."/>
            <person name="Potamousis K."/>
            <person name="Churas C."/>
            <person name="Place M."/>
            <person name="Herschleb J."/>
            <person name="Runnheim R."/>
            <person name="Forrest D."/>
            <person name="Amos-Landgraf J."/>
            <person name="Schwartz D.C."/>
            <person name="Cheng Z."/>
            <person name="Lindblad-Toh K."/>
            <person name="Eichler E.E."/>
            <person name="Ponting C.P."/>
        </authorList>
    </citation>
    <scope>NUCLEOTIDE SEQUENCE [LARGE SCALE GENOMIC DNA]</scope>
    <source>
        <strain>C57BL/6J</strain>
    </source>
</reference>
<reference key="4">
    <citation type="journal article" date="2004" name="Genome Res.">
        <title>The status, quality, and expansion of the NIH full-length cDNA project: the Mammalian Gene Collection (MGC).</title>
        <authorList>
            <consortium name="The MGC Project Team"/>
        </authorList>
    </citation>
    <scope>NUCLEOTIDE SEQUENCE [LARGE SCALE MRNA] (ISOFORM 1)</scope>
    <source>
        <tissue>Brain</tissue>
    </source>
</reference>
<organism>
    <name type="scientific">Mus musculus</name>
    <name type="common">Mouse</name>
    <dbReference type="NCBI Taxonomy" id="10090"/>
    <lineage>
        <taxon>Eukaryota</taxon>
        <taxon>Metazoa</taxon>
        <taxon>Chordata</taxon>
        <taxon>Craniata</taxon>
        <taxon>Vertebrata</taxon>
        <taxon>Euteleostomi</taxon>
        <taxon>Mammalia</taxon>
        <taxon>Eutheria</taxon>
        <taxon>Euarchontoglires</taxon>
        <taxon>Glires</taxon>
        <taxon>Rodentia</taxon>
        <taxon>Myomorpha</taxon>
        <taxon>Muroidea</taxon>
        <taxon>Muridae</taxon>
        <taxon>Murinae</taxon>
        <taxon>Mus</taxon>
        <taxon>Mus</taxon>
    </lineage>
</organism>
<comment type="function">
    <text evidence="5">Putative solute transporter.</text>
</comment>
<comment type="subcellular location">
    <subcellularLocation>
        <location evidence="5">Membrane</location>
        <topology evidence="5">Multi-pass membrane protein</topology>
    </subcellularLocation>
</comment>
<comment type="alternative products">
    <event type="alternative splicing"/>
    <isoform>
        <id>Q8BZK4-1</id>
        <name>1</name>
        <sequence type="displayed"/>
    </isoform>
    <isoform>
        <id>Q8BZK4-2</id>
        <name>2</name>
        <sequence type="described" ref="VSP_029670 VSP_029671"/>
    </isoform>
    <isoform>
        <id>Q8BZK4-3</id>
        <name>3</name>
        <sequence type="described" ref="VSP_029672 VSP_029673"/>
    </isoform>
</comment>
<comment type="similarity">
    <text evidence="5">Belongs to the SLC35F solute transporter family.</text>
</comment>
<dbReference type="EMBL" id="AB041538">
    <property type="protein sequence ID" value="BAA95023.1"/>
    <property type="molecule type" value="mRNA"/>
</dbReference>
<dbReference type="EMBL" id="AK034308">
    <property type="protein sequence ID" value="BAC28670.1"/>
    <property type="molecule type" value="mRNA"/>
</dbReference>
<dbReference type="EMBL" id="AK046093">
    <property type="protein sequence ID" value="BAC32602.1"/>
    <property type="molecule type" value="mRNA"/>
</dbReference>
<dbReference type="EMBL" id="AK047949">
    <property type="protein sequence ID" value="BAC33198.1"/>
    <property type="molecule type" value="mRNA"/>
</dbReference>
<dbReference type="EMBL" id="AC154316">
    <property type="status" value="NOT_ANNOTATED_CDS"/>
    <property type="molecule type" value="Genomic_DNA"/>
</dbReference>
<dbReference type="EMBL" id="CT030637">
    <property type="status" value="NOT_ANNOTATED_CDS"/>
    <property type="molecule type" value="Genomic_DNA"/>
</dbReference>
<dbReference type="EMBL" id="BC145720">
    <property type="protein sequence ID" value="AAI45721.1"/>
    <property type="molecule type" value="mRNA"/>
</dbReference>
<dbReference type="CCDS" id="CCDS26997.1">
    <molecule id="Q8BZK4-1"/>
</dbReference>
<dbReference type="RefSeq" id="NP_083514.1">
    <molecule id="Q8BZK4-1"/>
    <property type="nucleotide sequence ID" value="NM_029238.2"/>
</dbReference>
<dbReference type="RefSeq" id="XP_030103948.1">
    <molecule id="Q8BZK4-2"/>
    <property type="nucleotide sequence ID" value="XM_030248088.1"/>
</dbReference>
<dbReference type="FunCoup" id="Q8BZK4">
    <property type="interactions" value="75"/>
</dbReference>
<dbReference type="STRING" id="10090.ENSMUSP00000073972"/>
<dbReference type="PhosphoSitePlus" id="Q8BZK4"/>
<dbReference type="PaxDb" id="10090-ENSMUSP00000073972"/>
<dbReference type="ProteomicsDB" id="256560">
    <molecule id="Q8BZK4-1"/>
</dbReference>
<dbReference type="ProteomicsDB" id="256561">
    <molecule id="Q8BZK4-2"/>
</dbReference>
<dbReference type="ProteomicsDB" id="256562">
    <molecule id="Q8BZK4-3"/>
</dbReference>
<dbReference type="Antibodypedia" id="50928">
    <property type="antibodies" value="24 antibodies from 9 providers"/>
</dbReference>
<dbReference type="DNASU" id="75288"/>
<dbReference type="Ensembl" id="ENSMUST00000074368.11">
    <molecule id="Q8BZK4-1"/>
    <property type="protein sequence ID" value="ENSMUSP00000073972.5"/>
    <property type="gene ID" value="ENSMUSG00000021852.15"/>
</dbReference>
<dbReference type="Ensembl" id="ENSMUST00000123534.2">
    <molecule id="Q8BZK4-3"/>
    <property type="protein sequence ID" value="ENSMUSP00000122405.2"/>
    <property type="gene ID" value="ENSMUSG00000021852.15"/>
</dbReference>
<dbReference type="Ensembl" id="ENSMUST00000138884.8">
    <molecule id="Q8BZK4-2"/>
    <property type="protein sequence ID" value="ENSMUSP00000119007.2"/>
    <property type="gene ID" value="ENSMUSG00000021852.15"/>
</dbReference>
<dbReference type="GeneID" id="75288"/>
<dbReference type="KEGG" id="mmu:75288"/>
<dbReference type="UCSC" id="uc007tkf.1">
    <molecule id="Q8BZK4-1"/>
    <property type="organism name" value="mouse"/>
</dbReference>
<dbReference type="UCSC" id="uc007tkg.1">
    <molecule id="Q8BZK4-3"/>
    <property type="organism name" value="mouse"/>
</dbReference>
<dbReference type="UCSC" id="uc011zjs.1">
    <molecule id="Q8BZK4-2"/>
    <property type="organism name" value="mouse"/>
</dbReference>
<dbReference type="AGR" id="MGI:1922538"/>
<dbReference type="CTD" id="341880"/>
<dbReference type="MGI" id="MGI:1922538">
    <property type="gene designation" value="Slc35f4"/>
</dbReference>
<dbReference type="VEuPathDB" id="HostDB:ENSMUSG00000021852"/>
<dbReference type="eggNOG" id="KOG4314">
    <property type="taxonomic scope" value="Eukaryota"/>
</dbReference>
<dbReference type="GeneTree" id="ENSGT00390000008727"/>
<dbReference type="HOGENOM" id="CLU_022280_1_0_1"/>
<dbReference type="InParanoid" id="Q8BZK4"/>
<dbReference type="OMA" id="TNCPSSH"/>
<dbReference type="OrthoDB" id="10062838at2759"/>
<dbReference type="PhylomeDB" id="Q8BZK4"/>
<dbReference type="TreeFam" id="TF313798"/>
<dbReference type="BioGRID-ORCS" id="75288">
    <property type="hits" value="1 hit in 77 CRISPR screens"/>
</dbReference>
<dbReference type="ChiTaRS" id="Slc35f4">
    <property type="organism name" value="mouse"/>
</dbReference>
<dbReference type="PRO" id="PR:Q8BZK4"/>
<dbReference type="Proteomes" id="UP000000589">
    <property type="component" value="Chromosome 14"/>
</dbReference>
<dbReference type="RNAct" id="Q8BZK4">
    <property type="molecule type" value="protein"/>
</dbReference>
<dbReference type="Bgee" id="ENSMUSG00000021852">
    <property type="expression patterns" value="Expressed in barrel cortex and 54 other cell types or tissues"/>
</dbReference>
<dbReference type="ExpressionAtlas" id="Q8BZK4">
    <property type="expression patterns" value="baseline and differential"/>
</dbReference>
<dbReference type="GO" id="GO:0016020">
    <property type="term" value="C:membrane"/>
    <property type="evidence" value="ECO:0007669"/>
    <property type="project" value="UniProtKB-SubCell"/>
</dbReference>
<dbReference type="InterPro" id="IPR000620">
    <property type="entry name" value="EamA_dom"/>
</dbReference>
<dbReference type="InterPro" id="IPR026505">
    <property type="entry name" value="Solute_c_fam_35_mem_F3/F4"/>
</dbReference>
<dbReference type="PANTHER" id="PTHR19346:SF2">
    <property type="entry name" value="SOLUTE CARRIER FAMILY 35 MEMBER F4"/>
    <property type="match status" value="1"/>
</dbReference>
<dbReference type="PANTHER" id="PTHR19346">
    <property type="entry name" value="SUGAR PHOSPHATE TRANSPORTER DOMAIN-CONTAINING PROTEIN"/>
    <property type="match status" value="1"/>
</dbReference>
<dbReference type="Pfam" id="PF00892">
    <property type="entry name" value="EamA"/>
    <property type="match status" value="1"/>
</dbReference>
<dbReference type="SUPFAM" id="SSF103481">
    <property type="entry name" value="Multidrug resistance efflux transporter EmrE"/>
    <property type="match status" value="1"/>
</dbReference>
<gene>
    <name type="primary">Slc35f4</name>
    <name type="ORF">MNCb-0335</name>
</gene>
<evidence type="ECO:0000255" key="1"/>
<evidence type="ECO:0000256" key="2">
    <source>
        <dbReference type="SAM" id="MobiDB-lite"/>
    </source>
</evidence>
<evidence type="ECO:0000303" key="3">
    <source>
    </source>
</evidence>
<evidence type="ECO:0000303" key="4">
    <source ref="1"/>
</evidence>
<evidence type="ECO:0000305" key="5"/>
<keyword id="KW-0025">Alternative splicing</keyword>
<keyword id="KW-0472">Membrane</keyword>
<keyword id="KW-1185">Reference proteome</keyword>
<keyword id="KW-0812">Transmembrane</keyword>
<keyword id="KW-1133">Transmembrane helix</keyword>
<keyword id="KW-0813">Transport</keyword>
<sequence length="485" mass="53704">MDVKAAPNGVATIEDRILRITGYYGYYPGYSSQKSTTRSSVTRCKPGPNCPSSHSSISRQLSPLSVTEDSSAPILELQSRGSSGVCGRRVERQSRSGDDGTQTRPESSSQENGLKARCLSCTSMVLKTIWGLLIILSVSSSWVGTTQIVKITYKNFYCPFFMTWFSTNWNIMFFPVYYSGHLATAQEKQSPIKKFRECSRIFGEDGLTLKLFLKRTAPFSILWTLTNYLYLLALKKLTATDVSALFCCNKAFVFLLSWIVLKDRFMGVRIVAAIMAITGIVMMAYADNFHADSIIGVAFAVGSASTSALYKVLFKMFLGSANFGEAAHFVSTLGFFNLIFISFTPIILYFTKVEHWSSFAALPWGCLCGMAGLWLAFNILVNVGVVLTYPILISIGTVLSVPGNAAVDLLKQEVIFNVVRLAATIIICIGFLLMLLPEEWDEITLRFINSLKEKKSEEHVEDLTDVSVHLRSRSRVNGTVSIPLA</sequence>
<feature type="chain" id="PRO_0000311966" description="Solute carrier family 35 member F4">
    <location>
        <begin position="1"/>
        <end position="485"/>
    </location>
</feature>
<feature type="transmembrane region" description="Helical" evidence="1">
    <location>
        <begin position="129"/>
        <end position="149"/>
    </location>
</feature>
<feature type="transmembrane region" description="Helical" evidence="1">
    <location>
        <begin position="156"/>
        <end position="176"/>
    </location>
</feature>
<feature type="transmembrane region" description="Helical" evidence="1">
    <location>
        <begin position="217"/>
        <end position="234"/>
    </location>
</feature>
<feature type="transmembrane region" description="Helical" evidence="1">
    <location>
        <begin position="241"/>
        <end position="261"/>
    </location>
</feature>
<feature type="transmembrane region" description="Helical" evidence="1">
    <location>
        <begin position="265"/>
        <end position="285"/>
    </location>
</feature>
<feature type="transmembrane region" description="Helical" evidence="1">
    <location>
        <begin position="294"/>
        <end position="314"/>
    </location>
</feature>
<feature type="transmembrane region" description="Helical" evidence="1">
    <location>
        <begin position="329"/>
        <end position="349"/>
    </location>
</feature>
<feature type="transmembrane region" description="Helical" evidence="1">
    <location>
        <begin position="359"/>
        <end position="381"/>
    </location>
</feature>
<feature type="transmembrane region" description="Helical" evidence="1">
    <location>
        <begin position="383"/>
        <end position="405"/>
    </location>
</feature>
<feature type="transmembrane region" description="Helical" evidence="1">
    <location>
        <begin position="414"/>
        <end position="434"/>
    </location>
</feature>
<feature type="domain" description="EamA">
    <location>
        <begin position="225"/>
        <end position="285"/>
    </location>
</feature>
<feature type="region of interest" description="Disordered" evidence="2">
    <location>
        <begin position="32"/>
        <end position="64"/>
    </location>
</feature>
<feature type="region of interest" description="Disordered" evidence="2">
    <location>
        <begin position="78"/>
        <end position="111"/>
    </location>
</feature>
<feature type="compositionally biased region" description="Polar residues" evidence="2">
    <location>
        <begin position="32"/>
        <end position="42"/>
    </location>
</feature>
<feature type="compositionally biased region" description="Polar residues" evidence="2">
    <location>
        <begin position="50"/>
        <end position="64"/>
    </location>
</feature>
<feature type="compositionally biased region" description="Basic and acidic residues" evidence="2">
    <location>
        <begin position="88"/>
        <end position="98"/>
    </location>
</feature>
<feature type="compositionally biased region" description="Polar residues" evidence="2">
    <location>
        <begin position="99"/>
        <end position="111"/>
    </location>
</feature>
<feature type="splice variant" id="VSP_029670" description="In isoform 2." evidence="4">
    <location>
        <begin position="1"/>
        <end position="150"/>
    </location>
</feature>
<feature type="splice variant" id="VSP_029671" description="In isoform 2." evidence="4">
    <original>ITYKNFYCPFFMTWFSTNWNIMFFP</original>
    <variation>MPVLHIHGSEDHLGTLDHLVSVIIL</variation>
    <location>
        <begin position="151"/>
        <end position="175"/>
    </location>
</feature>
<feature type="splice variant" id="VSP_029672" description="In isoform 3." evidence="3">
    <original>IVAAIMAITGIVMMAYADNFHADSIIGVAFAVGSASTSALYKVL</original>
    <variation>VMAHLIPCAVPPCFLNLITALLFPGVSLKLAPLVLSTNCNWKMC</variation>
    <location>
        <begin position="270"/>
        <end position="313"/>
    </location>
</feature>
<feature type="splice variant" id="VSP_029673" description="In isoform 3." evidence="3">
    <location>
        <begin position="314"/>
        <end position="485"/>
    </location>
</feature>
<feature type="sequence conflict" description="In Ref. 2; BAC32602." evidence="5" ref="2">
    <original>V</original>
    <variation>M</variation>
    <location>
        <position position="268"/>
    </location>
</feature>